<evidence type="ECO:0000256" key="1">
    <source>
        <dbReference type="SAM" id="MobiDB-lite"/>
    </source>
</evidence>
<evidence type="ECO:0000305" key="2"/>
<feature type="chain" id="PRO_0000078319" description="Heat shock 70 kDa protein homolog">
    <location>
        <begin position="1"/>
        <end position="637"/>
    </location>
</feature>
<feature type="region of interest" description="Disordered" evidence="1">
    <location>
        <begin position="615"/>
        <end position="637"/>
    </location>
</feature>
<feature type="sequence conflict" description="In Ref. 2; CAA28976." evidence="2" ref="2">
    <original>K</original>
    <variation>T</variation>
    <location>
        <position position="69"/>
    </location>
</feature>
<feature type="sequence conflict" description="In Ref. 2; CAA28976." evidence="2" ref="2">
    <original>A</original>
    <variation>P</variation>
    <location>
        <position position="114"/>
    </location>
</feature>
<feature type="sequence conflict" description="In Ref. 2; CAA28976." evidence="2" ref="2">
    <original>IRS</original>
    <variation>NRG</variation>
    <location>
        <begin position="251"/>
        <end position="253"/>
    </location>
</feature>
<feature type="sequence conflict" description="In Ref. 2; CAA28976." evidence="2" ref="2">
    <original>T</original>
    <variation>I</variation>
    <location>
        <position position="289"/>
    </location>
</feature>
<feature type="sequence conflict" description="In Ref. 2; CAA28976." evidence="2" ref="2">
    <original>E</original>
    <variation>D</variation>
    <location>
        <position position="381"/>
    </location>
</feature>
<feature type="sequence conflict" description="In Ref. 2; CAA28976." evidence="2" ref="2">
    <original>R</original>
    <variation>H</variation>
    <location>
        <position position="564"/>
    </location>
</feature>
<accession>P08418</accession>
<dbReference type="EMBL" id="L02415">
    <property type="protein sequence ID" value="AAA29898.1"/>
    <property type="molecule type" value="Genomic_DNA"/>
</dbReference>
<dbReference type="EMBL" id="X05384">
    <property type="protein sequence ID" value="CAA28976.1"/>
    <property type="molecule type" value="mRNA"/>
</dbReference>
<dbReference type="PIR" id="A48469">
    <property type="entry name" value="A48469"/>
</dbReference>
<dbReference type="SMR" id="P08418"/>
<dbReference type="FunCoup" id="P08418">
    <property type="interactions" value="1378"/>
</dbReference>
<dbReference type="STRING" id="6183.P08418"/>
<dbReference type="eggNOG" id="KOG0101">
    <property type="taxonomic scope" value="Eukaryota"/>
</dbReference>
<dbReference type="HOGENOM" id="CLU_005965_3_0_1"/>
<dbReference type="InParanoid" id="P08418"/>
<dbReference type="Proteomes" id="UP000008854">
    <property type="component" value="Unassembled WGS sequence"/>
</dbReference>
<dbReference type="GO" id="GO:0005524">
    <property type="term" value="F:ATP binding"/>
    <property type="evidence" value="ECO:0007669"/>
    <property type="project" value="UniProtKB-KW"/>
</dbReference>
<dbReference type="GO" id="GO:0140662">
    <property type="term" value="F:ATP-dependent protein folding chaperone"/>
    <property type="evidence" value="ECO:0007669"/>
    <property type="project" value="InterPro"/>
</dbReference>
<dbReference type="CDD" id="cd10233">
    <property type="entry name" value="ASKHA_NBD_HSP70_HSPA1"/>
    <property type="match status" value="1"/>
</dbReference>
<dbReference type="FunFam" id="2.60.34.10:FF:000002">
    <property type="entry name" value="Heat shock 70 kDa"/>
    <property type="match status" value="1"/>
</dbReference>
<dbReference type="FunFam" id="3.90.640.10:FF:000002">
    <property type="entry name" value="Heat shock 70 kDa"/>
    <property type="match status" value="1"/>
</dbReference>
<dbReference type="FunFam" id="3.30.420.40:FF:000172">
    <property type="entry name" value="Heat shock 70 kDa protein"/>
    <property type="match status" value="1"/>
</dbReference>
<dbReference type="FunFam" id="3.30.30.30:FF:000001">
    <property type="entry name" value="heat shock 70 kDa protein-like"/>
    <property type="match status" value="1"/>
</dbReference>
<dbReference type="FunFam" id="3.30.420.40:FF:000028">
    <property type="entry name" value="heat shock 70 kDa protein-like"/>
    <property type="match status" value="1"/>
</dbReference>
<dbReference type="FunFam" id="3.30.420.40:FF:000135">
    <property type="entry name" value="Heat shock cognate 71 kDa protein"/>
    <property type="match status" value="1"/>
</dbReference>
<dbReference type="FunFam" id="1.20.1270.10:FF:000024">
    <property type="entry name" value="Heat shock protein 70"/>
    <property type="match status" value="1"/>
</dbReference>
<dbReference type="FunFam" id="3.30.420.40:FF:000026">
    <property type="entry name" value="Heat shock protein 70"/>
    <property type="match status" value="1"/>
</dbReference>
<dbReference type="Gene3D" id="1.20.1270.10">
    <property type="match status" value="1"/>
</dbReference>
<dbReference type="Gene3D" id="3.30.30.30">
    <property type="match status" value="1"/>
</dbReference>
<dbReference type="Gene3D" id="3.30.420.40">
    <property type="match status" value="2"/>
</dbReference>
<dbReference type="Gene3D" id="3.90.640.10">
    <property type="entry name" value="Actin, Chain A, domain 4"/>
    <property type="match status" value="1"/>
</dbReference>
<dbReference type="Gene3D" id="2.60.34.10">
    <property type="entry name" value="Substrate Binding Domain Of DNAk, Chain A, domain 1"/>
    <property type="match status" value="1"/>
</dbReference>
<dbReference type="InterPro" id="IPR043129">
    <property type="entry name" value="ATPase_NBD"/>
</dbReference>
<dbReference type="InterPro" id="IPR018181">
    <property type="entry name" value="Heat_shock_70_CS"/>
</dbReference>
<dbReference type="InterPro" id="IPR029048">
    <property type="entry name" value="HSP70_C_sf"/>
</dbReference>
<dbReference type="InterPro" id="IPR029047">
    <property type="entry name" value="HSP70_peptide-bd_sf"/>
</dbReference>
<dbReference type="InterPro" id="IPR013126">
    <property type="entry name" value="Hsp_70_fam"/>
</dbReference>
<dbReference type="NCBIfam" id="NF001413">
    <property type="entry name" value="PRK00290.1"/>
    <property type="match status" value="1"/>
</dbReference>
<dbReference type="PANTHER" id="PTHR19375">
    <property type="entry name" value="HEAT SHOCK PROTEIN 70KDA"/>
    <property type="match status" value="1"/>
</dbReference>
<dbReference type="Pfam" id="PF00012">
    <property type="entry name" value="HSP70"/>
    <property type="match status" value="1"/>
</dbReference>
<dbReference type="PRINTS" id="PR00301">
    <property type="entry name" value="HEATSHOCK70"/>
</dbReference>
<dbReference type="SUPFAM" id="SSF53067">
    <property type="entry name" value="Actin-like ATPase domain"/>
    <property type="match status" value="2"/>
</dbReference>
<dbReference type="SUPFAM" id="SSF100934">
    <property type="entry name" value="Heat shock protein 70kD (HSP70), C-terminal subdomain"/>
    <property type="match status" value="1"/>
</dbReference>
<dbReference type="SUPFAM" id="SSF100920">
    <property type="entry name" value="Heat shock protein 70kD (HSP70), peptide-binding domain"/>
    <property type="match status" value="1"/>
</dbReference>
<dbReference type="PROSITE" id="PS00297">
    <property type="entry name" value="HSP70_1"/>
    <property type="match status" value="1"/>
</dbReference>
<dbReference type="PROSITE" id="PS00329">
    <property type="entry name" value="HSP70_2"/>
    <property type="match status" value="1"/>
</dbReference>
<dbReference type="PROSITE" id="PS01036">
    <property type="entry name" value="HSP70_3"/>
    <property type="match status" value="1"/>
</dbReference>
<comment type="function">
    <text>Major immunogen in Schistosoma mansoni infections. Possibly plays an important role in parasite development and pathogenesis.</text>
</comment>
<comment type="similarity">
    <text evidence="2">Belongs to the heat shock protein 70 family.</text>
</comment>
<reference key="1">
    <citation type="journal article" date="1992" name="Mol. Biochem. Parasitol.">
        <title>Cloning and sequencing of an hsp70 gene of Schistosoma mansoni.</title>
        <authorList>
            <person name="Neumann S."/>
            <person name="Ziv E."/>
            <person name="Lanter F."/>
            <person name="Schechter I."/>
        </authorList>
    </citation>
    <scope>NUCLEOTIDE SEQUENCE [GENOMIC DNA]</scope>
</reference>
<reference key="2">
    <citation type="journal article" date="1987" name="J. Exp. Med.">
        <title>A major immunogen in Schistosoma mansoni infections is homologous to the heat-shock protein Hsp70.</title>
        <authorList>
            <person name="Hedstrom R."/>
            <person name="Culpepper J."/>
            <person name="Harrison R.A."/>
            <person name="Agabian N."/>
            <person name="Newport G."/>
        </authorList>
    </citation>
    <scope>NUCLEOTIDE SEQUENCE [MRNA] OF 19-637</scope>
</reference>
<keyword id="KW-0067">ATP-binding</keyword>
<keyword id="KW-0547">Nucleotide-binding</keyword>
<keyword id="KW-1185">Reference proteome</keyword>
<keyword id="KW-0346">Stress response</keyword>
<name>HSP70_SCHMA</name>
<protein>
    <recommendedName>
        <fullName>Heat shock 70 kDa protein homolog</fullName>
        <shortName>HSP70</shortName>
    </recommendedName>
    <alternativeName>
        <fullName>Major surface antigen</fullName>
    </alternativeName>
</protein>
<proteinExistence type="evidence at transcript level"/>
<sequence length="637" mass="69875">MPNAIGIDLGTTYSCVGVFQHGKVEIIANDQGNRTTPSYVAFTDSERLIGDGAKNQVAMNPTNTVFDAKRLIGRRFDDPSVQSDMKHWPFEVTQVGGKLKICVEYKGEKKMFSAEEISSMVLTKMKEVAESYLGRTVSDAVITVPAYFNDSQRQATKDAGAIAGLNVLRIINEPTAAAIAYGLDKKVGGERNVLIFDLGGGTFDVSILTIEDGIFEVKSTAGDTHLGGEDFDNRMVDHFVKEFQKKYNKDIRSNKRALRRLRTACERAKRTLSSSAQTNLEIDSLCDGTDFYTVITRARFEELNADLFRGTLDPVEKALRDAKMDKSQIHDIVLVGGSTRIPKVQKLLQDFFNGKELNKSINPDEAVAYGAAVQAAILSGEKCEAVQDLLLLDVAPLSLGLETAGGVMTALIKRNTTIPTKQTQTFTTYSDNQPGVLIQVFEGERALTKDNNLLGKFELSGIPPAPRGTPQIEVTFDIDANGILNVSAVDKGTGKQNKITITNDKGRLSKEEIERMVADADKYKAEDEKQRDRVSAKNSLESYVYTMKQQVEGELKEKIPESDRQVIISKCEDTISWLDVHQSAEKHEYESKREELEKVCAPIITKVYQAGGMPGGMHEASGAGGGSGKGPTIEEVD</sequence>
<organism>
    <name type="scientific">Schistosoma mansoni</name>
    <name type="common">Blood fluke</name>
    <dbReference type="NCBI Taxonomy" id="6183"/>
    <lineage>
        <taxon>Eukaryota</taxon>
        <taxon>Metazoa</taxon>
        <taxon>Spiralia</taxon>
        <taxon>Lophotrochozoa</taxon>
        <taxon>Platyhelminthes</taxon>
        <taxon>Trematoda</taxon>
        <taxon>Digenea</taxon>
        <taxon>Strigeidida</taxon>
        <taxon>Schistosomatoidea</taxon>
        <taxon>Schistosomatidae</taxon>
        <taxon>Schistosoma</taxon>
    </lineage>
</organism>